<evidence type="ECO:0000269" key="1">
    <source>
    </source>
</evidence>
<evidence type="ECO:0000305" key="2"/>
<evidence type="ECO:0007829" key="3">
    <source>
        <dbReference type="PDB" id="1OYJ"/>
    </source>
</evidence>
<comment type="function">
    <text>Conjugation of reduced glutathione to a wide number of exogenous and endogenous hydrophobic electrophiles.</text>
</comment>
<comment type="catalytic activity">
    <reaction>
        <text>RX + glutathione = an S-substituted glutathione + a halide anion + H(+)</text>
        <dbReference type="Rhea" id="RHEA:16437"/>
        <dbReference type="ChEBI" id="CHEBI:15378"/>
        <dbReference type="ChEBI" id="CHEBI:16042"/>
        <dbReference type="ChEBI" id="CHEBI:17792"/>
        <dbReference type="ChEBI" id="CHEBI:57925"/>
        <dbReference type="ChEBI" id="CHEBI:90779"/>
        <dbReference type="EC" id="2.5.1.18"/>
    </reaction>
</comment>
<comment type="similarity">
    <text evidence="2">Belongs to the GST superfamily. Tau family.</text>
</comment>
<organism>
    <name type="scientific">Oryza sativa subsp. japonica</name>
    <name type="common">Rice</name>
    <dbReference type="NCBI Taxonomy" id="39947"/>
    <lineage>
        <taxon>Eukaryota</taxon>
        <taxon>Viridiplantae</taxon>
        <taxon>Streptophyta</taxon>
        <taxon>Embryophyta</taxon>
        <taxon>Tracheophyta</taxon>
        <taxon>Spermatophyta</taxon>
        <taxon>Magnoliopsida</taxon>
        <taxon>Liliopsida</taxon>
        <taxon>Poales</taxon>
        <taxon>Poaceae</taxon>
        <taxon>BOP clade</taxon>
        <taxon>Oryzoideae</taxon>
        <taxon>Oryzeae</taxon>
        <taxon>Oryzinae</taxon>
        <taxon>Oryza</taxon>
        <taxon>Oryza sativa</taxon>
    </lineage>
</organism>
<accession>Q10CE7</accession>
<accession>B7EUJ2</accession>
<accession>O65032</accession>
<name>GSTU1_ORYSJ</name>
<dbReference type="EC" id="2.5.1.18"/>
<dbReference type="EMBL" id="DP000009">
    <property type="protein sequence ID" value="ABF99228.1"/>
    <property type="molecule type" value="Genomic_DNA"/>
</dbReference>
<dbReference type="EMBL" id="AP008209">
    <property type="protein sequence ID" value="BAF13399.1"/>
    <property type="molecule type" value="Genomic_DNA"/>
</dbReference>
<dbReference type="EMBL" id="AP014959">
    <property type="protein sequence ID" value="BAS86728.1"/>
    <property type="molecule type" value="Genomic_DNA"/>
</dbReference>
<dbReference type="EMBL" id="CM000140">
    <property type="protein sequence ID" value="EAZ28825.1"/>
    <property type="molecule type" value="Genomic_DNA"/>
</dbReference>
<dbReference type="EMBL" id="AK103358">
    <property type="protein sequence ID" value="BAG96039.1"/>
    <property type="molecule type" value="mRNA"/>
</dbReference>
<dbReference type="RefSeq" id="XP_015630984.1">
    <property type="nucleotide sequence ID" value="XM_015775498.1"/>
</dbReference>
<dbReference type="PDB" id="1OYJ">
    <property type="method" value="X-ray"/>
    <property type="resolution" value="1.95 A"/>
    <property type="chains" value="A/B/C/D=1-231"/>
</dbReference>
<dbReference type="PDBsum" id="1OYJ"/>
<dbReference type="SMR" id="Q10CE7"/>
<dbReference type="FunCoup" id="Q10CE7">
    <property type="interactions" value="92"/>
</dbReference>
<dbReference type="STRING" id="39947.Q10CE7"/>
<dbReference type="PaxDb" id="39947-Q10CE7"/>
<dbReference type="EnsemblPlants" id="Os03t0785900-01">
    <property type="protein sequence ID" value="Os03t0785900-01"/>
    <property type="gene ID" value="Os03g0785900"/>
</dbReference>
<dbReference type="Gramene" id="Os03t0785900-01">
    <property type="protein sequence ID" value="Os03t0785900-01"/>
    <property type="gene ID" value="Os03g0785900"/>
</dbReference>
<dbReference type="KEGG" id="dosa:Os03g0785900"/>
<dbReference type="eggNOG" id="KOG0406">
    <property type="taxonomic scope" value="Eukaryota"/>
</dbReference>
<dbReference type="HOGENOM" id="CLU_011226_18_2_1"/>
<dbReference type="InParanoid" id="Q10CE7"/>
<dbReference type="OMA" id="WARRCGQ"/>
<dbReference type="OrthoDB" id="202840at2759"/>
<dbReference type="EvolutionaryTrace" id="Q10CE7"/>
<dbReference type="Proteomes" id="UP000000763">
    <property type="component" value="Chromosome 3"/>
</dbReference>
<dbReference type="Proteomes" id="UP000007752">
    <property type="component" value="Chromosome 3"/>
</dbReference>
<dbReference type="Proteomes" id="UP000059680">
    <property type="component" value="Chromosome 3"/>
</dbReference>
<dbReference type="GO" id="GO:0005737">
    <property type="term" value="C:cytoplasm"/>
    <property type="evidence" value="ECO:0000318"/>
    <property type="project" value="GO_Central"/>
</dbReference>
<dbReference type="GO" id="GO:0004364">
    <property type="term" value="F:glutathione transferase activity"/>
    <property type="evidence" value="ECO:0000318"/>
    <property type="project" value="GO_Central"/>
</dbReference>
<dbReference type="GO" id="GO:0006749">
    <property type="term" value="P:glutathione metabolic process"/>
    <property type="evidence" value="ECO:0000318"/>
    <property type="project" value="GO_Central"/>
</dbReference>
<dbReference type="CDD" id="cd03185">
    <property type="entry name" value="GST_C_Tau"/>
    <property type="match status" value="1"/>
</dbReference>
<dbReference type="CDD" id="cd03058">
    <property type="entry name" value="GST_N_Tau"/>
    <property type="match status" value="1"/>
</dbReference>
<dbReference type="FunFam" id="1.20.1050.10:FF:000018">
    <property type="entry name" value="Glutathione S-transferase U20"/>
    <property type="match status" value="1"/>
</dbReference>
<dbReference type="FunFam" id="3.40.30.10:FF:000014">
    <property type="entry name" value="Tau class glutathione S-transferase"/>
    <property type="match status" value="1"/>
</dbReference>
<dbReference type="Gene3D" id="1.20.1050.10">
    <property type="match status" value="1"/>
</dbReference>
<dbReference type="Gene3D" id="3.40.30.10">
    <property type="entry name" value="Glutaredoxin"/>
    <property type="match status" value="1"/>
</dbReference>
<dbReference type="InterPro" id="IPR010987">
    <property type="entry name" value="Glutathione-S-Trfase_C-like"/>
</dbReference>
<dbReference type="InterPro" id="IPR036282">
    <property type="entry name" value="Glutathione-S-Trfase_C_sf"/>
</dbReference>
<dbReference type="InterPro" id="IPR040079">
    <property type="entry name" value="Glutathione_S-Trfase"/>
</dbReference>
<dbReference type="InterPro" id="IPR004045">
    <property type="entry name" value="Glutathione_S-Trfase_N"/>
</dbReference>
<dbReference type="InterPro" id="IPR045074">
    <property type="entry name" value="GST_C_Tau"/>
</dbReference>
<dbReference type="InterPro" id="IPR045073">
    <property type="entry name" value="Omega/Tau-like"/>
</dbReference>
<dbReference type="InterPro" id="IPR036249">
    <property type="entry name" value="Thioredoxin-like_sf"/>
</dbReference>
<dbReference type="PANTHER" id="PTHR11260:SF732">
    <property type="entry name" value="GLUTATHIONE S-TRANSFERASE GSTU1-RELATED"/>
    <property type="match status" value="1"/>
</dbReference>
<dbReference type="PANTHER" id="PTHR11260">
    <property type="entry name" value="GLUTATHIONE S-TRANSFERASE, GST, SUPERFAMILY, GST DOMAIN CONTAINING"/>
    <property type="match status" value="1"/>
</dbReference>
<dbReference type="Pfam" id="PF13410">
    <property type="entry name" value="GST_C_2"/>
    <property type="match status" value="1"/>
</dbReference>
<dbReference type="Pfam" id="PF13417">
    <property type="entry name" value="GST_N_3"/>
    <property type="match status" value="1"/>
</dbReference>
<dbReference type="SFLD" id="SFLDS00019">
    <property type="entry name" value="Glutathione_Transferase_(cytos"/>
    <property type="match status" value="1"/>
</dbReference>
<dbReference type="SFLD" id="SFLDG01152">
    <property type="entry name" value="Main.3:_Omega-_and_Tau-like"/>
    <property type="match status" value="1"/>
</dbReference>
<dbReference type="SUPFAM" id="SSF47616">
    <property type="entry name" value="GST C-terminal domain-like"/>
    <property type="match status" value="1"/>
</dbReference>
<dbReference type="SUPFAM" id="SSF52833">
    <property type="entry name" value="Thioredoxin-like"/>
    <property type="match status" value="1"/>
</dbReference>
<dbReference type="PROSITE" id="PS50405">
    <property type="entry name" value="GST_CTER"/>
    <property type="match status" value="1"/>
</dbReference>
<dbReference type="PROSITE" id="PS50404">
    <property type="entry name" value="GST_NTER"/>
    <property type="match status" value="1"/>
</dbReference>
<protein>
    <recommendedName>
        <fullName>Probable glutathione S-transferase GSTU1</fullName>
        <ecNumber>2.5.1.18</ecNumber>
    </recommendedName>
</protein>
<feature type="chain" id="PRO_0000185869" description="Probable glutathione S-transferase GSTU1">
    <location>
        <begin position="1"/>
        <end position="231"/>
    </location>
</feature>
<feature type="domain" description="GST N-terminal">
    <location>
        <begin position="5"/>
        <end position="84"/>
    </location>
</feature>
<feature type="domain" description="GST C-terminal">
    <location>
        <begin position="97"/>
        <end position="220"/>
    </location>
</feature>
<feature type="binding site" evidence="1">
    <location>
        <position position="15"/>
    </location>
    <ligand>
        <name>glutathione</name>
        <dbReference type="ChEBI" id="CHEBI:57925"/>
    </ligand>
</feature>
<feature type="binding site" evidence="1">
    <location>
        <position position="42"/>
    </location>
    <ligand>
        <name>glutathione</name>
        <dbReference type="ChEBI" id="CHEBI:57925"/>
    </ligand>
</feature>
<feature type="binding site" evidence="1">
    <location>
        <position position="56"/>
    </location>
    <ligand>
        <name>glutathione</name>
        <dbReference type="ChEBI" id="CHEBI:57925"/>
    </ligand>
</feature>
<feature type="binding site">
    <location>
        <begin position="68"/>
        <end position="69"/>
    </location>
    <ligand>
        <name>glutathione</name>
        <dbReference type="ChEBI" id="CHEBI:57925"/>
    </ligand>
</feature>
<feature type="strand" evidence="3">
    <location>
        <begin position="7"/>
        <end position="11"/>
    </location>
</feature>
<feature type="helix" evidence="3">
    <location>
        <begin position="16"/>
        <end position="28"/>
    </location>
</feature>
<feature type="strand" evidence="3">
    <location>
        <begin position="33"/>
        <end position="36"/>
    </location>
</feature>
<feature type="helix" evidence="3">
    <location>
        <begin position="44"/>
        <end position="49"/>
    </location>
</feature>
<feature type="turn" evidence="3">
    <location>
        <begin position="51"/>
        <end position="53"/>
    </location>
</feature>
<feature type="strand" evidence="3">
    <location>
        <begin position="58"/>
        <end position="61"/>
    </location>
</feature>
<feature type="strand" evidence="3">
    <location>
        <begin position="64"/>
        <end position="68"/>
    </location>
</feature>
<feature type="helix" evidence="3">
    <location>
        <begin position="69"/>
        <end position="79"/>
    </location>
</feature>
<feature type="helix" evidence="3">
    <location>
        <begin position="97"/>
        <end position="124"/>
    </location>
</feature>
<feature type="helix" evidence="3">
    <location>
        <begin position="127"/>
        <end position="148"/>
    </location>
</feature>
<feature type="strand" evidence="3">
    <location>
        <begin position="152"/>
        <end position="158"/>
    </location>
</feature>
<feature type="helix" evidence="3">
    <location>
        <begin position="164"/>
        <end position="169"/>
    </location>
</feature>
<feature type="helix" evidence="3">
    <location>
        <begin position="170"/>
        <end position="175"/>
    </location>
</feature>
<feature type="helix" evidence="3">
    <location>
        <begin position="176"/>
        <end position="183"/>
    </location>
</feature>
<feature type="helix" evidence="3">
    <location>
        <begin position="187"/>
        <end position="190"/>
    </location>
</feature>
<feature type="helix" evidence="3">
    <location>
        <begin position="192"/>
        <end position="201"/>
    </location>
</feature>
<feature type="helix" evidence="3">
    <location>
        <begin position="205"/>
        <end position="210"/>
    </location>
</feature>
<feature type="helix" evidence="3">
    <location>
        <begin position="214"/>
        <end position="229"/>
    </location>
</feature>
<reference key="1">
    <citation type="journal article" date="2005" name="Genome Res.">
        <title>Sequence, annotation, and analysis of synteny between rice chromosome 3 and diverged grass species.</title>
        <authorList>
            <consortium name="The rice chromosome 3 sequencing consortium"/>
            <person name="Buell C.R."/>
            <person name="Yuan Q."/>
            <person name="Ouyang S."/>
            <person name="Liu J."/>
            <person name="Zhu W."/>
            <person name="Wang A."/>
            <person name="Maiti R."/>
            <person name="Haas B."/>
            <person name="Wortman J."/>
            <person name="Pertea M."/>
            <person name="Jones K.M."/>
            <person name="Kim M."/>
            <person name="Overton L."/>
            <person name="Tsitrin T."/>
            <person name="Fadrosh D."/>
            <person name="Bera J."/>
            <person name="Weaver B."/>
            <person name="Jin S."/>
            <person name="Johri S."/>
            <person name="Reardon M."/>
            <person name="Webb K."/>
            <person name="Hill J."/>
            <person name="Moffat K."/>
            <person name="Tallon L."/>
            <person name="Van Aken S."/>
            <person name="Lewis M."/>
            <person name="Utterback T."/>
            <person name="Feldblyum T."/>
            <person name="Zismann V."/>
            <person name="Iobst S."/>
            <person name="Hsiao J."/>
            <person name="de Vazeille A.R."/>
            <person name="Salzberg S.L."/>
            <person name="White O."/>
            <person name="Fraser C.M."/>
            <person name="Yu Y."/>
            <person name="Kim H."/>
            <person name="Rambo T."/>
            <person name="Currie J."/>
            <person name="Collura K."/>
            <person name="Kernodle-Thompson S."/>
            <person name="Wei F."/>
            <person name="Kudrna K."/>
            <person name="Ammiraju J.S.S."/>
            <person name="Luo M."/>
            <person name="Goicoechea J.L."/>
            <person name="Wing R.A."/>
            <person name="Henry D."/>
            <person name="Oates R."/>
            <person name="Palmer M."/>
            <person name="Pries G."/>
            <person name="Saski C."/>
            <person name="Simmons J."/>
            <person name="Soderlund C."/>
            <person name="Nelson W."/>
            <person name="de la Bastide M."/>
            <person name="Spiegel L."/>
            <person name="Nascimento L."/>
            <person name="Huang E."/>
            <person name="Preston R."/>
            <person name="Zutavern T."/>
            <person name="Palmer L."/>
            <person name="O'Shaughnessy A."/>
            <person name="Dike S."/>
            <person name="McCombie W.R."/>
            <person name="Minx P."/>
            <person name="Cordum H."/>
            <person name="Wilson R."/>
            <person name="Jin W."/>
            <person name="Lee H.R."/>
            <person name="Jiang J."/>
            <person name="Jackson S."/>
        </authorList>
    </citation>
    <scope>NUCLEOTIDE SEQUENCE [LARGE SCALE GENOMIC DNA]</scope>
    <source>
        <strain>cv. Nipponbare</strain>
    </source>
</reference>
<reference key="2">
    <citation type="journal article" date="2005" name="Nature">
        <title>The map-based sequence of the rice genome.</title>
        <authorList>
            <consortium name="International rice genome sequencing project (IRGSP)"/>
        </authorList>
    </citation>
    <scope>NUCLEOTIDE SEQUENCE [LARGE SCALE GENOMIC DNA]</scope>
    <source>
        <strain>cv. Nipponbare</strain>
    </source>
</reference>
<reference key="3">
    <citation type="journal article" date="2008" name="Nucleic Acids Res.">
        <title>The rice annotation project database (RAP-DB): 2008 update.</title>
        <authorList>
            <consortium name="The rice annotation project (RAP)"/>
        </authorList>
    </citation>
    <scope>GENOME REANNOTATION</scope>
    <source>
        <strain>cv. Nipponbare</strain>
    </source>
</reference>
<reference key="4">
    <citation type="journal article" date="2013" name="Rice">
        <title>Improvement of the Oryza sativa Nipponbare reference genome using next generation sequence and optical map data.</title>
        <authorList>
            <person name="Kawahara Y."/>
            <person name="de la Bastide M."/>
            <person name="Hamilton J.P."/>
            <person name="Kanamori H."/>
            <person name="McCombie W.R."/>
            <person name="Ouyang S."/>
            <person name="Schwartz D.C."/>
            <person name="Tanaka T."/>
            <person name="Wu J."/>
            <person name="Zhou S."/>
            <person name="Childs K.L."/>
            <person name="Davidson R.M."/>
            <person name="Lin H."/>
            <person name="Quesada-Ocampo L."/>
            <person name="Vaillancourt B."/>
            <person name="Sakai H."/>
            <person name="Lee S.S."/>
            <person name="Kim J."/>
            <person name="Numa H."/>
            <person name="Itoh T."/>
            <person name="Buell C.R."/>
            <person name="Matsumoto T."/>
        </authorList>
    </citation>
    <scope>GENOME REANNOTATION</scope>
    <source>
        <strain>cv. Nipponbare</strain>
    </source>
</reference>
<reference key="5">
    <citation type="journal article" date="2005" name="PLoS Biol.">
        <title>The genomes of Oryza sativa: a history of duplications.</title>
        <authorList>
            <person name="Yu J."/>
            <person name="Wang J."/>
            <person name="Lin W."/>
            <person name="Li S."/>
            <person name="Li H."/>
            <person name="Zhou J."/>
            <person name="Ni P."/>
            <person name="Dong W."/>
            <person name="Hu S."/>
            <person name="Zeng C."/>
            <person name="Zhang J."/>
            <person name="Zhang Y."/>
            <person name="Li R."/>
            <person name="Xu Z."/>
            <person name="Li S."/>
            <person name="Li X."/>
            <person name="Zheng H."/>
            <person name="Cong L."/>
            <person name="Lin L."/>
            <person name="Yin J."/>
            <person name="Geng J."/>
            <person name="Li G."/>
            <person name="Shi J."/>
            <person name="Liu J."/>
            <person name="Lv H."/>
            <person name="Li J."/>
            <person name="Wang J."/>
            <person name="Deng Y."/>
            <person name="Ran L."/>
            <person name="Shi X."/>
            <person name="Wang X."/>
            <person name="Wu Q."/>
            <person name="Li C."/>
            <person name="Ren X."/>
            <person name="Wang J."/>
            <person name="Wang X."/>
            <person name="Li D."/>
            <person name="Liu D."/>
            <person name="Zhang X."/>
            <person name="Ji Z."/>
            <person name="Zhao W."/>
            <person name="Sun Y."/>
            <person name="Zhang Z."/>
            <person name="Bao J."/>
            <person name="Han Y."/>
            <person name="Dong L."/>
            <person name="Ji J."/>
            <person name="Chen P."/>
            <person name="Wu S."/>
            <person name="Liu J."/>
            <person name="Xiao Y."/>
            <person name="Bu D."/>
            <person name="Tan J."/>
            <person name="Yang L."/>
            <person name="Ye C."/>
            <person name="Zhang J."/>
            <person name="Xu J."/>
            <person name="Zhou Y."/>
            <person name="Yu Y."/>
            <person name="Zhang B."/>
            <person name="Zhuang S."/>
            <person name="Wei H."/>
            <person name="Liu B."/>
            <person name="Lei M."/>
            <person name="Yu H."/>
            <person name="Li Y."/>
            <person name="Xu H."/>
            <person name="Wei S."/>
            <person name="He X."/>
            <person name="Fang L."/>
            <person name="Zhang Z."/>
            <person name="Zhang Y."/>
            <person name="Huang X."/>
            <person name="Su Z."/>
            <person name="Tong W."/>
            <person name="Li J."/>
            <person name="Tong Z."/>
            <person name="Li S."/>
            <person name="Ye J."/>
            <person name="Wang L."/>
            <person name="Fang L."/>
            <person name="Lei T."/>
            <person name="Chen C.-S."/>
            <person name="Chen H.-C."/>
            <person name="Xu Z."/>
            <person name="Li H."/>
            <person name="Huang H."/>
            <person name="Zhang F."/>
            <person name="Xu H."/>
            <person name="Li N."/>
            <person name="Zhao C."/>
            <person name="Li S."/>
            <person name="Dong L."/>
            <person name="Huang Y."/>
            <person name="Li L."/>
            <person name="Xi Y."/>
            <person name="Qi Q."/>
            <person name="Li W."/>
            <person name="Zhang B."/>
            <person name="Hu W."/>
            <person name="Zhang Y."/>
            <person name="Tian X."/>
            <person name="Jiao Y."/>
            <person name="Liang X."/>
            <person name="Jin J."/>
            <person name="Gao L."/>
            <person name="Zheng W."/>
            <person name="Hao B."/>
            <person name="Liu S.-M."/>
            <person name="Wang W."/>
            <person name="Yuan L."/>
            <person name="Cao M."/>
            <person name="McDermott J."/>
            <person name="Samudrala R."/>
            <person name="Wang J."/>
            <person name="Wong G.K.-S."/>
            <person name="Yang H."/>
        </authorList>
    </citation>
    <scope>NUCLEOTIDE SEQUENCE [LARGE SCALE GENOMIC DNA]</scope>
    <source>
        <strain>cv. Nipponbare</strain>
    </source>
</reference>
<reference key="6">
    <citation type="journal article" date="2003" name="Science">
        <title>Collection, mapping, and annotation of over 28,000 cDNA clones from japonica rice.</title>
        <authorList>
            <consortium name="The rice full-length cDNA consortium"/>
        </authorList>
    </citation>
    <scope>NUCLEOTIDE SEQUENCE [LARGE SCALE MRNA]</scope>
    <source>
        <strain>cv. Nipponbare</strain>
    </source>
</reference>
<reference key="7">
    <citation type="journal article" date="2004" name="Mol. Genet. Genomics">
        <title>Organisation and structural evolution of the rice glutathione S-transferase gene family.</title>
        <authorList>
            <person name="Soranzo N."/>
            <person name="Sari Gorla M."/>
            <person name="Mizzi L."/>
            <person name="De Toma G."/>
            <person name="Frova C."/>
        </authorList>
    </citation>
    <scope>GENE FAMILY</scope>
    <scope>NOMENCLATURE</scope>
</reference>
<reference key="8">
    <citation type="journal article" date="2003" name="J. Biol. Chem.">
        <title>Forced evolution of a herbicide detoxifying glutathione transferase.</title>
        <authorList>
            <person name="Dixon D.P."/>
            <person name="McEwen A.G."/>
            <person name="Lapthorn A.J."/>
            <person name="Edwards R."/>
        </authorList>
    </citation>
    <scope>X-RAY CRYSTALLOGRAPHY (1.95 ANGSTROMS) IN COMPLEX WITH GLUTATHIONE</scope>
</reference>
<sequence>MAEEKELVLLDFWVSPFGQRCRIAMAEKGLEFEYREEDLGNKSDLLLRSNPVHRKIPVLLHAGRPVSESLVILQYLDDAFPGTPHLLPPANSGDADAAYARATARFWADYVDRKLYDCGSRLWRLKGEPQAAAGREMAEILRTLEAELGDREFFGGGGGGRLGFVDVALVPFTAWFYSYERCGGFSVEEVAPRLAAWARRCGRIDSVVKHLPSPEKVYDFVGVLKKKYGVE</sequence>
<gene>
    <name type="primary">GSTU1</name>
    <name type="synonym">GST1</name>
    <name type="ordered locus">Os03g0785900</name>
    <name type="ordered locus">LOC_Os03g57200</name>
    <name type="ORF">OsJ_012308</name>
</gene>
<keyword id="KW-0002">3D-structure</keyword>
<keyword id="KW-1185">Reference proteome</keyword>
<keyword id="KW-0808">Transferase</keyword>
<proteinExistence type="evidence at protein level"/>